<organism>
    <name type="scientific">Homo sapiens</name>
    <name type="common">Human</name>
    <dbReference type="NCBI Taxonomy" id="9606"/>
    <lineage>
        <taxon>Eukaryota</taxon>
        <taxon>Metazoa</taxon>
        <taxon>Chordata</taxon>
        <taxon>Craniata</taxon>
        <taxon>Vertebrata</taxon>
        <taxon>Euteleostomi</taxon>
        <taxon>Mammalia</taxon>
        <taxon>Eutheria</taxon>
        <taxon>Euarchontoglires</taxon>
        <taxon>Primates</taxon>
        <taxon>Haplorrhini</taxon>
        <taxon>Catarrhini</taxon>
        <taxon>Hominidae</taxon>
        <taxon>Homo</taxon>
    </lineage>
</organism>
<keyword id="KW-0002">3D-structure</keyword>
<keyword id="KW-0160">Chromosomal rearrangement</keyword>
<keyword id="KW-1015">Disulfide bond</keyword>
<keyword id="KW-0325">Glycoprotein</keyword>
<keyword id="KW-0960">Knottin</keyword>
<keyword id="KW-0550">Obesity</keyword>
<keyword id="KW-1267">Proteomics identification</keyword>
<keyword id="KW-1185">Reference proteome</keyword>
<keyword id="KW-0964">Secreted</keyword>
<keyword id="KW-0732">Signal</keyword>
<comment type="function">
    <text evidence="1">Involved in the regulation of melanogenesis. The binding of ASP to MC1R precludes alpha-MSH initiated signaling and thus blocks production of cAMP, leading to a down-regulation of eumelanogenesis (brown/black pigment) and thus increasing synthesis of pheomelanin (yellow/red pigment). In higher primates, agouti may affect the quality of hair pigmentation rather than its pattern of deposition. Could well play a role in neuroendocrine aspects of melanocortin action. May have some functional role in regulating the lipid metabolism with adipocytes.</text>
</comment>
<comment type="subcellular location">
    <subcellularLocation>
        <location evidence="7">Secreted</location>
    </subcellularLocation>
</comment>
<comment type="tissue specificity">
    <text evidence="7 8 9">Widely expressed at low levels. Highly expressed in the skin. Expressed in adipose tissue.</text>
</comment>
<comment type="domain">
    <text>The presence of a 'disulfide through disulfide knot' structurally defines this protein as a knottin.</text>
</comment>
<comment type="polymorphism">
    <text evidence="5">Genetic variants in ASIP define the skin/hair/eye pigmentation variation locus 9 (SHEP9) [MIM:611742]. Hair, eye and skin pigmentation are among the most visible examples of human phenotypic variation, with a broad normal range that is subject to substantial geographic stratification. In the case of skin, individuals tend to have lighter pigmentation with increasing distance from the equator. By contrast, the majority of variation in human eye and hair color is found among individuals of European ancestry, with most other human populations fixed for brown eyes and black hair.</text>
</comment>
<comment type="disease" evidence="7">
    <disease id="DI-06589">
        <name>Obesity and hypopigmentation</name>
        <acronym>OBHP</acronym>
        <description>An autosomal dominant disorder characterized by early-onset obesity, overgrowth, hyperinsulinemia, and hypopigmentation of the skin. Some affected individuals experience hyperphagia and exhibit reduced energy expenditure.</description>
        <dbReference type="MIM" id="620195"/>
    </disease>
    <text evidence="7">The gene represented in this entry is involved in disease pathogenesis. A tandem duplication on chromosome 20 encompassing the neighboring genes ASIP and ITCH creates an ITCH-ASIP transcript consisting of the first two non-coding ITCH exons fused to the ASIP coding exons. This results in ASIP ectopic overexpression controlled by the ubiquitously active ITCH promoter. Ectopically expressed ASIP may antagonize MC4R signaling in the hypothalamus and may affect processes related to eating behavior and energy expenditure.</text>
</comment>
<protein>
    <recommendedName>
        <fullName>Agouti-signaling protein</fullName>
        <shortName>ASP</shortName>
    </recommendedName>
    <alternativeName>
        <fullName>Agouti switch protein</fullName>
    </alternativeName>
</protein>
<name>ASIP_HUMAN</name>
<proteinExistence type="evidence at protein level"/>
<reference key="1">
    <citation type="journal article" date="1994" name="Proc. Natl. Acad. Sci. U.S.A.">
        <title>Molecular structure and chromosomal mapping of the human homolog of the agouti gene.</title>
        <authorList>
            <person name="Kwon H.-Y."/>
            <person name="Bultman S.J."/>
            <person name="Loeffler C."/>
            <person name="Chen W.-J."/>
            <person name="Furdon P.J."/>
            <person name="Powell J.G."/>
            <person name="Usala A.-L."/>
            <person name="Wilkison W."/>
            <person name="Hansmann I."/>
            <person name="Woychik R.P."/>
        </authorList>
    </citation>
    <scope>NUCLEOTIDE SEQUENCE [GENOMIC DNA]</scope>
    <scope>TISSUE SPECIFICITY</scope>
</reference>
<reference key="2">
    <citation type="journal article" date="1995" name="Hum. Mol. Genet.">
        <title>Structure and function of ASP, the human homolog of the mouse agouti gene.</title>
        <authorList>
            <person name="Wilson B.D."/>
            <person name="Ollmann M.M."/>
            <person name="Kang L."/>
            <person name="Stoffel M."/>
            <person name="Bell G.I."/>
            <person name="Barsh G.S."/>
        </authorList>
    </citation>
    <scope>NUCLEOTIDE SEQUENCE [GENOMIC DNA]</scope>
    <scope>TISSUE SPECIFICITY</scope>
</reference>
<reference key="3">
    <citation type="journal article" date="2001" name="Nature">
        <title>The DNA sequence and comparative analysis of human chromosome 20.</title>
        <authorList>
            <person name="Deloukas P."/>
            <person name="Matthews L.H."/>
            <person name="Ashurst J.L."/>
            <person name="Burton J."/>
            <person name="Gilbert J.G.R."/>
            <person name="Jones M."/>
            <person name="Stavrides G."/>
            <person name="Almeida J.P."/>
            <person name="Babbage A.K."/>
            <person name="Bagguley C.L."/>
            <person name="Bailey J."/>
            <person name="Barlow K.F."/>
            <person name="Bates K.N."/>
            <person name="Beard L.M."/>
            <person name="Beare D.M."/>
            <person name="Beasley O.P."/>
            <person name="Bird C.P."/>
            <person name="Blakey S.E."/>
            <person name="Bridgeman A.M."/>
            <person name="Brown A.J."/>
            <person name="Buck D."/>
            <person name="Burrill W.D."/>
            <person name="Butler A.P."/>
            <person name="Carder C."/>
            <person name="Carter N.P."/>
            <person name="Chapman J.C."/>
            <person name="Clamp M."/>
            <person name="Clark G."/>
            <person name="Clark L.N."/>
            <person name="Clark S.Y."/>
            <person name="Clee C.M."/>
            <person name="Clegg S."/>
            <person name="Cobley V.E."/>
            <person name="Collier R.E."/>
            <person name="Connor R.E."/>
            <person name="Corby N.R."/>
            <person name="Coulson A."/>
            <person name="Coville G.J."/>
            <person name="Deadman R."/>
            <person name="Dhami P.D."/>
            <person name="Dunn M."/>
            <person name="Ellington A.G."/>
            <person name="Frankland J.A."/>
            <person name="Fraser A."/>
            <person name="French L."/>
            <person name="Garner P."/>
            <person name="Grafham D.V."/>
            <person name="Griffiths C."/>
            <person name="Griffiths M.N.D."/>
            <person name="Gwilliam R."/>
            <person name="Hall R.E."/>
            <person name="Hammond S."/>
            <person name="Harley J.L."/>
            <person name="Heath P.D."/>
            <person name="Ho S."/>
            <person name="Holden J.L."/>
            <person name="Howden P.J."/>
            <person name="Huckle E."/>
            <person name="Hunt A.R."/>
            <person name="Hunt S.E."/>
            <person name="Jekosch K."/>
            <person name="Johnson C.M."/>
            <person name="Johnson D."/>
            <person name="Kay M.P."/>
            <person name="Kimberley A.M."/>
            <person name="King A."/>
            <person name="Knights A."/>
            <person name="Laird G.K."/>
            <person name="Lawlor S."/>
            <person name="Lehvaeslaiho M.H."/>
            <person name="Leversha M.A."/>
            <person name="Lloyd C."/>
            <person name="Lloyd D.M."/>
            <person name="Lovell J.D."/>
            <person name="Marsh V.L."/>
            <person name="Martin S.L."/>
            <person name="McConnachie L.J."/>
            <person name="McLay K."/>
            <person name="McMurray A.A."/>
            <person name="Milne S.A."/>
            <person name="Mistry D."/>
            <person name="Moore M.J.F."/>
            <person name="Mullikin J.C."/>
            <person name="Nickerson T."/>
            <person name="Oliver K."/>
            <person name="Parker A."/>
            <person name="Patel R."/>
            <person name="Pearce T.A.V."/>
            <person name="Peck A.I."/>
            <person name="Phillimore B.J.C.T."/>
            <person name="Prathalingam S.R."/>
            <person name="Plumb R.W."/>
            <person name="Ramsay H."/>
            <person name="Rice C.M."/>
            <person name="Ross M.T."/>
            <person name="Scott C.E."/>
            <person name="Sehra H.K."/>
            <person name="Shownkeen R."/>
            <person name="Sims S."/>
            <person name="Skuce C.D."/>
            <person name="Smith M.L."/>
            <person name="Soderlund C."/>
            <person name="Steward C.A."/>
            <person name="Sulston J.E."/>
            <person name="Swann R.M."/>
            <person name="Sycamore N."/>
            <person name="Taylor R."/>
            <person name="Tee L."/>
            <person name="Thomas D.W."/>
            <person name="Thorpe A."/>
            <person name="Tracey A."/>
            <person name="Tromans A.C."/>
            <person name="Vaudin M."/>
            <person name="Wall M."/>
            <person name="Wallis J.M."/>
            <person name="Whitehead S.L."/>
            <person name="Whittaker P."/>
            <person name="Willey D.L."/>
            <person name="Williams L."/>
            <person name="Williams S.A."/>
            <person name="Wilming L."/>
            <person name="Wray P.W."/>
            <person name="Hubbard T."/>
            <person name="Durbin R.M."/>
            <person name="Bentley D.R."/>
            <person name="Beck S."/>
            <person name="Rogers J."/>
        </authorList>
    </citation>
    <scope>NUCLEOTIDE SEQUENCE [LARGE SCALE GENOMIC DNA]</scope>
</reference>
<reference key="4">
    <citation type="journal article" date="2004" name="Genome Res.">
        <title>The status, quality, and expansion of the NIH full-length cDNA project: the Mammalian Gene Collection (MGC).</title>
        <authorList>
            <consortium name="The MGC Project Team"/>
        </authorList>
    </citation>
    <scope>NUCLEOTIDE SEQUENCE [LARGE SCALE MRNA]</scope>
</reference>
<reference key="5">
    <citation type="journal article" date="2005" name="J. Mol. Biol.">
        <title>Structures of the agouti signaling protein.</title>
        <authorList>
            <person name="McNulty J.C."/>
            <person name="Jackson P.J."/>
            <person name="Thompson D.A."/>
            <person name="Chai B."/>
            <person name="Gantz I."/>
            <person name="Barsh G.S."/>
            <person name="Dawson P.E."/>
            <person name="Millhauser G.L."/>
        </authorList>
    </citation>
    <scope>STRUCTURE BY NMR OF 80-132</scope>
    <scope>DISULFIDE BONDS</scope>
</reference>
<reference key="6">
    <citation type="journal article" date="2002" name="Am. J. Hum. Genet.">
        <title>A polymorphism in the agouti signaling protein gene is associated with human pigmentation.</title>
        <authorList>
            <person name="Kanetsky P.A."/>
            <person name="Swoyer J."/>
            <person name="Panossian S."/>
            <person name="Holmes R."/>
            <person name="Guerry D."/>
            <person name="Rebbeck T.R."/>
        </authorList>
    </citation>
    <scope>INVOLVEMENT IN SHEP9</scope>
</reference>
<reference key="7">
    <citation type="journal article" date="2022" name="Nat. Metab.">
        <title>Aberrant expression of agouti signaling protein (ASIP) as a cause of monogenic severe childhood obesity.</title>
        <authorList>
            <person name="Kempf E."/>
            <person name="Landgraf K."/>
            <person name="Stein R."/>
            <person name="Hanschkow M."/>
            <person name="Hilbert A."/>
            <person name="Abou Jamra R."/>
            <person name="Boczki P."/>
            <person name="Herberth G."/>
            <person name="Kuehnapfel A."/>
            <person name="Tseng Y.H."/>
            <person name="Staeubert C."/>
            <person name="Schoeneberg T."/>
            <person name="Kuehnen P."/>
            <person name="Rayner N.W."/>
            <person name="Zeggini E."/>
            <person name="Kiess W."/>
            <person name="Blueher M."/>
            <person name="Koerner A."/>
        </authorList>
    </citation>
    <scope>INVOLVEMENT IN OBHP</scope>
    <scope>SUBCELLULAR LOCATION</scope>
    <scope>TISSUE SPECIFICITY</scope>
</reference>
<dbReference type="EMBL" id="U12775">
    <property type="protein sequence ID" value="AAB61247.1"/>
    <property type="molecule type" value="Genomic_DNA"/>
</dbReference>
<dbReference type="EMBL" id="U12770">
    <property type="protein sequence ID" value="AAB61247.1"/>
    <property type="status" value="JOINED"/>
    <property type="molecule type" value="Genomic_DNA"/>
</dbReference>
<dbReference type="EMBL" id="U12774">
    <property type="protein sequence ID" value="AAB61247.1"/>
    <property type="status" value="JOINED"/>
    <property type="molecule type" value="Genomic_DNA"/>
</dbReference>
<dbReference type="EMBL" id="L37019">
    <property type="protein sequence ID" value="AAA89208.1"/>
    <property type="molecule type" value="Genomic_DNA"/>
</dbReference>
<dbReference type="EMBL" id="AL035458">
    <property type="status" value="NOT_ANNOTATED_CDS"/>
    <property type="molecule type" value="Genomic_DNA"/>
</dbReference>
<dbReference type="EMBL" id="BC104238">
    <property type="protein sequence ID" value="AAI04239.1"/>
    <property type="molecule type" value="mRNA"/>
</dbReference>
<dbReference type="EMBL" id="BC104239">
    <property type="protein sequence ID" value="AAI04240.1"/>
    <property type="molecule type" value="mRNA"/>
</dbReference>
<dbReference type="CCDS" id="CCDS13232.1"/>
<dbReference type="PIR" id="I37143">
    <property type="entry name" value="I37143"/>
</dbReference>
<dbReference type="RefSeq" id="NP_001372147.1">
    <property type="nucleotide sequence ID" value="NM_001385218.1"/>
</dbReference>
<dbReference type="RefSeq" id="NP_001663.2">
    <property type="nucleotide sequence ID" value="NM_001672.2"/>
</dbReference>
<dbReference type="RefSeq" id="XP_011527122.1">
    <property type="nucleotide sequence ID" value="XM_011528820.2"/>
</dbReference>
<dbReference type="RefSeq" id="XP_011527123.1">
    <property type="nucleotide sequence ID" value="XM_011528821.1"/>
</dbReference>
<dbReference type="RefSeq" id="XP_054179425.1">
    <property type="nucleotide sequence ID" value="XM_054323450.1"/>
</dbReference>
<dbReference type="RefSeq" id="XP_054179426.1">
    <property type="nucleotide sequence ID" value="XM_054323451.1"/>
</dbReference>
<dbReference type="PDB" id="1Y7J">
    <property type="method" value="NMR"/>
    <property type="chains" value="A=80-132"/>
</dbReference>
<dbReference type="PDB" id="1Y7K">
    <property type="method" value="NMR"/>
    <property type="chains" value="A=80-132"/>
</dbReference>
<dbReference type="PDB" id="2KZA">
    <property type="method" value="NMR"/>
    <property type="chains" value="A=80-132"/>
</dbReference>
<dbReference type="PDB" id="2L1J">
    <property type="method" value="NMR"/>
    <property type="chains" value="A=93-126"/>
</dbReference>
<dbReference type="PDBsum" id="1Y7J"/>
<dbReference type="PDBsum" id="1Y7K"/>
<dbReference type="PDBsum" id="2KZA"/>
<dbReference type="PDBsum" id="2L1J"/>
<dbReference type="SMR" id="P42127"/>
<dbReference type="BioGRID" id="106926">
    <property type="interactions" value="19"/>
</dbReference>
<dbReference type="FunCoup" id="P42127">
    <property type="interactions" value="267"/>
</dbReference>
<dbReference type="IntAct" id="P42127">
    <property type="interactions" value="8"/>
</dbReference>
<dbReference type="STRING" id="9606.ENSP00000454804"/>
<dbReference type="GlyCosmos" id="P42127">
    <property type="glycosylation" value="1 site, No reported glycans"/>
</dbReference>
<dbReference type="GlyGen" id="P42127">
    <property type="glycosylation" value="1 site"/>
</dbReference>
<dbReference type="iPTMnet" id="P42127"/>
<dbReference type="PhosphoSitePlus" id="P42127"/>
<dbReference type="BioMuta" id="ASIP"/>
<dbReference type="DMDM" id="1168389"/>
<dbReference type="MassIVE" id="P42127"/>
<dbReference type="PaxDb" id="9606-ENSP00000454804"/>
<dbReference type="PeptideAtlas" id="P42127"/>
<dbReference type="ProteomicsDB" id="55487"/>
<dbReference type="Antibodypedia" id="25783">
    <property type="antibodies" value="82 antibodies from 15 providers"/>
</dbReference>
<dbReference type="DNASU" id="434"/>
<dbReference type="Ensembl" id="ENST00000374954.4">
    <property type="protein sequence ID" value="ENSP00000364092.3"/>
    <property type="gene ID" value="ENSG00000101440.10"/>
</dbReference>
<dbReference type="Ensembl" id="ENST00000568305.5">
    <property type="protein sequence ID" value="ENSP00000454804.1"/>
    <property type="gene ID" value="ENSG00000101440.10"/>
</dbReference>
<dbReference type="GeneID" id="434"/>
<dbReference type="KEGG" id="hsa:434"/>
<dbReference type="MANE-Select" id="ENST00000374954.4">
    <property type="protein sequence ID" value="ENSP00000364092.3"/>
    <property type="RefSeq nucleotide sequence ID" value="NM_001672.3"/>
    <property type="RefSeq protein sequence ID" value="NP_001663.2"/>
</dbReference>
<dbReference type="UCSC" id="uc002xah.2">
    <property type="organism name" value="human"/>
</dbReference>
<dbReference type="AGR" id="HGNC:745"/>
<dbReference type="CTD" id="434"/>
<dbReference type="DisGeNET" id="434"/>
<dbReference type="GeneCards" id="ASIP"/>
<dbReference type="HGNC" id="HGNC:745">
    <property type="gene designation" value="ASIP"/>
</dbReference>
<dbReference type="HPA" id="ENSG00000101440">
    <property type="expression patterns" value="Group enriched (epididymis, heart muscle, ovary)"/>
</dbReference>
<dbReference type="MalaCards" id="ASIP"/>
<dbReference type="MIM" id="600201">
    <property type="type" value="gene"/>
</dbReference>
<dbReference type="MIM" id="611742">
    <property type="type" value="phenotype"/>
</dbReference>
<dbReference type="MIM" id="620195">
    <property type="type" value="phenotype"/>
</dbReference>
<dbReference type="neXtProt" id="NX_P42127"/>
<dbReference type="OpenTargets" id="ENSG00000101440"/>
<dbReference type="PharmGKB" id="PA25045"/>
<dbReference type="VEuPathDB" id="HostDB:ENSG00000101440"/>
<dbReference type="eggNOG" id="ENOG502S5XF">
    <property type="taxonomic scope" value="Eukaryota"/>
</dbReference>
<dbReference type="GeneTree" id="ENSGT00940000154258"/>
<dbReference type="HOGENOM" id="CLU_138633_0_0_1"/>
<dbReference type="InParanoid" id="P42127"/>
<dbReference type="OMA" id="CHCRFFR"/>
<dbReference type="PAN-GO" id="P42127">
    <property type="GO annotations" value="5 GO annotations based on evolutionary models"/>
</dbReference>
<dbReference type="PhylomeDB" id="P42127"/>
<dbReference type="TreeFam" id="TF330729"/>
<dbReference type="PathwayCommons" id="P42127"/>
<dbReference type="SignaLink" id="P42127"/>
<dbReference type="SIGNOR" id="P42127"/>
<dbReference type="BioGRID-ORCS" id="434">
    <property type="hits" value="17 hits in 1144 CRISPR screens"/>
</dbReference>
<dbReference type="ChiTaRS" id="ASIP">
    <property type="organism name" value="human"/>
</dbReference>
<dbReference type="EvolutionaryTrace" id="P42127"/>
<dbReference type="GenomeRNAi" id="434"/>
<dbReference type="Pharos" id="P42127">
    <property type="development level" value="Tbio"/>
</dbReference>
<dbReference type="PRO" id="PR:P42127"/>
<dbReference type="Proteomes" id="UP000005640">
    <property type="component" value="Chromosome 20"/>
</dbReference>
<dbReference type="RNAct" id="P42127">
    <property type="molecule type" value="protein"/>
</dbReference>
<dbReference type="Bgee" id="ENSG00000101440">
    <property type="expression patterns" value="Expressed in apex of heart and 97 other cell types or tissues"/>
</dbReference>
<dbReference type="GO" id="GO:0005615">
    <property type="term" value="C:extracellular space"/>
    <property type="evidence" value="ECO:0000314"/>
    <property type="project" value="UniProtKB"/>
</dbReference>
<dbReference type="GO" id="GO:0031779">
    <property type="term" value="F:melanocortin receptor binding"/>
    <property type="evidence" value="ECO:0000318"/>
    <property type="project" value="GO_Central"/>
</dbReference>
<dbReference type="GO" id="GO:0005184">
    <property type="term" value="F:neuropeptide hormone activity"/>
    <property type="evidence" value="ECO:0000318"/>
    <property type="project" value="GO_Central"/>
</dbReference>
<dbReference type="GO" id="GO:0005102">
    <property type="term" value="F:signaling receptor binding"/>
    <property type="evidence" value="ECO:0000304"/>
    <property type="project" value="ProtInc"/>
</dbReference>
<dbReference type="GO" id="GO:0031781">
    <property type="term" value="F:type 3 melanocortin receptor binding"/>
    <property type="evidence" value="ECO:0007669"/>
    <property type="project" value="Ensembl"/>
</dbReference>
<dbReference type="GO" id="GO:0031782">
    <property type="term" value="F:type 4 melanocortin receptor binding"/>
    <property type="evidence" value="ECO:0007669"/>
    <property type="project" value="Ensembl"/>
</dbReference>
<dbReference type="GO" id="GO:0008343">
    <property type="term" value="P:adult feeding behavior"/>
    <property type="evidence" value="ECO:0007669"/>
    <property type="project" value="Ensembl"/>
</dbReference>
<dbReference type="GO" id="GO:0007267">
    <property type="term" value="P:cell-cell signaling"/>
    <property type="evidence" value="ECO:0000304"/>
    <property type="project" value="ProtInc"/>
</dbReference>
<dbReference type="GO" id="GO:0044725">
    <property type="term" value="P:epigenetic programming in the zygotic pronuclei"/>
    <property type="evidence" value="ECO:0007669"/>
    <property type="project" value="Ensembl"/>
</dbReference>
<dbReference type="GO" id="GO:0006091">
    <property type="term" value="P:generation of precursor metabolites and energy"/>
    <property type="evidence" value="ECO:0000304"/>
    <property type="project" value="ProtInc"/>
</dbReference>
<dbReference type="GO" id="GO:0009755">
    <property type="term" value="P:hormone-mediated signaling pathway"/>
    <property type="evidence" value="ECO:0007669"/>
    <property type="project" value="InterPro"/>
</dbReference>
<dbReference type="GO" id="GO:0042438">
    <property type="term" value="P:melanin biosynthetic process"/>
    <property type="evidence" value="ECO:0000250"/>
    <property type="project" value="UniProtKB"/>
</dbReference>
<dbReference type="GO" id="GO:0032438">
    <property type="term" value="P:melanosome organization"/>
    <property type="evidence" value="ECO:0000318"/>
    <property type="project" value="GO_Central"/>
</dbReference>
<dbReference type="GO" id="GO:0032402">
    <property type="term" value="P:melanosome transport"/>
    <property type="evidence" value="ECO:0007669"/>
    <property type="project" value="Ensembl"/>
</dbReference>
<dbReference type="GO" id="GO:0048023">
    <property type="term" value="P:positive regulation of melanin biosynthetic process"/>
    <property type="evidence" value="ECO:0007669"/>
    <property type="project" value="Ensembl"/>
</dbReference>
<dbReference type="GO" id="GO:0007165">
    <property type="term" value="P:signal transduction"/>
    <property type="evidence" value="ECO:0000304"/>
    <property type="project" value="ProtInc"/>
</dbReference>
<dbReference type="FunFam" id="4.10.760.10:FF:000002">
    <property type="entry name" value="Agouti-signaling protein"/>
    <property type="match status" value="1"/>
</dbReference>
<dbReference type="Gene3D" id="4.10.760.10">
    <property type="entry name" value="Agouti domain"/>
    <property type="match status" value="1"/>
</dbReference>
<dbReference type="InterPro" id="IPR007733">
    <property type="entry name" value="Agouti"/>
</dbReference>
<dbReference type="InterPro" id="IPR027300">
    <property type="entry name" value="Agouti_dom"/>
</dbReference>
<dbReference type="InterPro" id="IPR036836">
    <property type="entry name" value="Agouti_dom_sf"/>
</dbReference>
<dbReference type="PANTHER" id="PTHR16551">
    <property type="entry name" value="AGOUTI RELATED"/>
    <property type="match status" value="1"/>
</dbReference>
<dbReference type="PANTHER" id="PTHR16551:SF1">
    <property type="entry name" value="AGOUTI-SIGNALING PROTEIN"/>
    <property type="match status" value="1"/>
</dbReference>
<dbReference type="Pfam" id="PF05039">
    <property type="entry name" value="Agouti"/>
    <property type="match status" value="1"/>
</dbReference>
<dbReference type="SMART" id="SM00792">
    <property type="entry name" value="Agouti"/>
    <property type="match status" value="1"/>
</dbReference>
<dbReference type="SUPFAM" id="SSF57055">
    <property type="entry name" value="Agouti-related protein"/>
    <property type="match status" value="1"/>
</dbReference>
<dbReference type="PROSITE" id="PS60024">
    <property type="entry name" value="AGOUTI_1"/>
    <property type="match status" value="1"/>
</dbReference>
<dbReference type="PROSITE" id="PS51150">
    <property type="entry name" value="AGOUTI_2"/>
    <property type="match status" value="1"/>
</dbReference>
<feature type="signal peptide" evidence="2">
    <location>
        <begin position="1"/>
        <end position="22"/>
    </location>
</feature>
<feature type="chain" id="PRO_0000001028" description="Agouti-signaling protein">
    <location>
        <begin position="23"/>
        <end position="132"/>
    </location>
</feature>
<feature type="domain" description="Agouti" evidence="3">
    <location>
        <begin position="93"/>
        <end position="132"/>
    </location>
</feature>
<feature type="region of interest" description="Disordered" evidence="4">
    <location>
        <begin position="62"/>
        <end position="85"/>
    </location>
</feature>
<feature type="compositionally biased region" description="Basic and acidic residues" evidence="4">
    <location>
        <begin position="65"/>
        <end position="79"/>
    </location>
</feature>
<feature type="glycosylation site" description="N-linked (GlcNAc...) asparagine" evidence="2">
    <location>
        <position position="39"/>
    </location>
</feature>
<feature type="disulfide bond" evidence="3 6">
    <location>
        <begin position="93"/>
        <end position="108"/>
    </location>
</feature>
<feature type="disulfide bond" evidence="3 6">
    <location>
        <begin position="100"/>
        <end position="114"/>
    </location>
</feature>
<feature type="disulfide bond" evidence="3 6">
    <location>
        <begin position="107"/>
        <end position="125"/>
    </location>
</feature>
<feature type="disulfide bond" evidence="3 6">
    <location>
        <begin position="111"/>
        <end position="132"/>
    </location>
</feature>
<feature type="disulfide bond" evidence="3 6">
    <location>
        <begin position="116"/>
        <end position="123"/>
    </location>
</feature>
<feature type="sequence variant" id="VAR_022125" description="In dbSNP:rs2296151.">
    <original>V</original>
    <variation>A</variation>
    <location>
        <position position="13"/>
    </location>
</feature>
<feature type="sequence variant" id="VAR_005003" description="In dbSNP:rs1129414.">
    <original>Q</original>
    <variation>P</variation>
    <location>
        <position position="61"/>
    </location>
</feature>
<feature type="strand" evidence="11">
    <location>
        <begin position="96"/>
        <end position="98"/>
    </location>
</feature>
<feature type="strand" evidence="10">
    <location>
        <begin position="102"/>
        <end position="105"/>
    </location>
</feature>
<feature type="strand" evidence="10">
    <location>
        <begin position="113"/>
        <end position="116"/>
    </location>
</feature>
<feature type="strand" evidence="10">
    <location>
        <begin position="123"/>
        <end position="126"/>
    </location>
</feature>
<evidence type="ECO:0000250" key="1">
    <source>
        <dbReference type="UniProtKB" id="Q03288"/>
    </source>
</evidence>
<evidence type="ECO:0000255" key="2"/>
<evidence type="ECO:0000255" key="3">
    <source>
        <dbReference type="PROSITE-ProRule" id="PRU00494"/>
    </source>
</evidence>
<evidence type="ECO:0000256" key="4">
    <source>
        <dbReference type="SAM" id="MobiDB-lite"/>
    </source>
</evidence>
<evidence type="ECO:0000269" key="5">
    <source>
    </source>
</evidence>
<evidence type="ECO:0000269" key="6">
    <source>
    </source>
</evidence>
<evidence type="ECO:0000269" key="7">
    <source>
    </source>
</evidence>
<evidence type="ECO:0000269" key="8">
    <source>
    </source>
</evidence>
<evidence type="ECO:0000269" key="9">
    <source>
    </source>
</evidence>
<evidence type="ECO:0007829" key="10">
    <source>
        <dbReference type="PDB" id="1Y7J"/>
    </source>
</evidence>
<evidence type="ECO:0007829" key="11">
    <source>
        <dbReference type="PDB" id="2KZA"/>
    </source>
</evidence>
<sequence length="132" mass="14515">MDVTRLLLATLLVFLCFFTANSHLPPEEKLRDDRSLRSNSSVNLLDVPSVSIVALNKKSKQIGRKAAEKKRSSKKEASMKKVVRPRTPLSAPCVATRNSCKPPAPACCDPCASCQCRFFRSACSCRVLSLNC</sequence>
<accession>P42127</accession>
<accession>Q3SXL2</accession>
<gene>
    <name type="primary">ASIP</name>
    <name type="synonym">AGTI</name>
    <name type="synonym">AGTIL</name>
    <name type="synonym">ASP</name>
</gene>